<comment type="function">
    <text evidence="5">Essential component of a corepressor complex that represses transcription of neuron-specific genes in non-neuronal cells. The BHC complex is recruited by Ttk88 and probably acts by deacetylating and demethylating specific sites on histones, thereby acting as a chromatin modifier. May serve as a molecular beacon for the recruitment of molecular machinery that imposes silencing across a chromosomal interval.</text>
</comment>
<comment type="subunit">
    <text evidence="5">Component of a complex that contains at least HDAC1/Rpd3, CoRest and Su(var)3-3/Hdm. Interacts with neuronal repressor ttk/Ttk88.</text>
</comment>
<comment type="subcellular location">
    <subcellularLocation>
        <location evidence="2 3 5">Nucleus</location>
    </subcellularLocation>
</comment>
<comment type="alternative products">
    <event type="alternative splicing"/>
    <isoform>
        <id>Q59E36-2</id>
        <name>1</name>
        <name>F</name>
        <sequence type="displayed"/>
    </isoform>
    <isoform>
        <id>Q59E36-3</id>
        <name>2</name>
        <name>A</name>
        <name>C</name>
        <name>D</name>
        <name>dCRS</name>
        <sequence type="described" ref="VSP_017466 VSP_017467"/>
    </isoform>
    <isoform>
        <id>Q59E36-4</id>
        <name>3</name>
        <name>E</name>
        <sequence type="described" ref="VSP_055323"/>
    </isoform>
</comment>
<comment type="tissue specificity">
    <text evidence="5">Present in all of the tissues examined including both glia and neurons of the CNS (at protein level). Expressed ubiquitously in the embryo. In contrast, expression of isoform 3 is highly enriched in the nervous system.</text>
</comment>
<comment type="similarity">
    <text evidence="9">Belongs to the CoREST family.</text>
</comment>
<comment type="sequence caution" evidence="9">
    <conflict type="erroneous initiation">
        <sequence resource="EMBL-CDS" id="AAL25265"/>
    </conflict>
    <text>Truncated N-terminus.</text>
</comment>
<comment type="sequence caution" evidence="9">
    <conflict type="erroneous initiation">
        <sequence resource="EMBL-CDS" id="AAM49876"/>
    </conflict>
    <text>Truncated N-terminus.</text>
</comment>
<accession>Q59E36</accession>
<accession>A4V4S3</accession>
<accession>Q494F9</accession>
<accession>Q59E35</accession>
<accession>Q8MSX7</accession>
<accession>Q95TC9</accession>
<accession>Q9VWH3</accession>
<evidence type="ECO:0000255" key="1"/>
<evidence type="ECO:0000255" key="2">
    <source>
        <dbReference type="PROSITE-ProRule" id="PRU00512"/>
    </source>
</evidence>
<evidence type="ECO:0000255" key="3">
    <source>
        <dbReference type="PROSITE-ProRule" id="PRU00624"/>
    </source>
</evidence>
<evidence type="ECO:0000256" key="4">
    <source>
        <dbReference type="SAM" id="MobiDB-lite"/>
    </source>
</evidence>
<evidence type="ECO:0000269" key="5">
    <source>
    </source>
</evidence>
<evidence type="ECO:0000269" key="6">
    <source>
    </source>
</evidence>
<evidence type="ECO:0000269" key="7">
    <source>
    </source>
</evidence>
<evidence type="ECO:0000303" key="8">
    <source>
    </source>
</evidence>
<evidence type="ECO:0000305" key="9"/>
<reference key="1">
    <citation type="journal article" date="2000" name="Science">
        <title>The genome sequence of Drosophila melanogaster.</title>
        <authorList>
            <person name="Adams M.D."/>
            <person name="Celniker S.E."/>
            <person name="Holt R.A."/>
            <person name="Evans C.A."/>
            <person name="Gocayne J.D."/>
            <person name="Amanatides P.G."/>
            <person name="Scherer S.E."/>
            <person name="Li P.W."/>
            <person name="Hoskins R.A."/>
            <person name="Galle R.F."/>
            <person name="George R.A."/>
            <person name="Lewis S.E."/>
            <person name="Richards S."/>
            <person name="Ashburner M."/>
            <person name="Henderson S.N."/>
            <person name="Sutton G.G."/>
            <person name="Wortman J.R."/>
            <person name="Yandell M.D."/>
            <person name="Zhang Q."/>
            <person name="Chen L.X."/>
            <person name="Brandon R.C."/>
            <person name="Rogers Y.-H.C."/>
            <person name="Blazej R.G."/>
            <person name="Champe M."/>
            <person name="Pfeiffer B.D."/>
            <person name="Wan K.H."/>
            <person name="Doyle C."/>
            <person name="Baxter E.G."/>
            <person name="Helt G."/>
            <person name="Nelson C.R."/>
            <person name="Miklos G.L.G."/>
            <person name="Abril J.F."/>
            <person name="Agbayani A."/>
            <person name="An H.-J."/>
            <person name="Andrews-Pfannkoch C."/>
            <person name="Baldwin D."/>
            <person name="Ballew R.M."/>
            <person name="Basu A."/>
            <person name="Baxendale J."/>
            <person name="Bayraktaroglu L."/>
            <person name="Beasley E.M."/>
            <person name="Beeson K.Y."/>
            <person name="Benos P.V."/>
            <person name="Berman B.P."/>
            <person name="Bhandari D."/>
            <person name="Bolshakov S."/>
            <person name="Borkova D."/>
            <person name="Botchan M.R."/>
            <person name="Bouck J."/>
            <person name="Brokstein P."/>
            <person name="Brottier P."/>
            <person name="Burtis K.C."/>
            <person name="Busam D.A."/>
            <person name="Butler H."/>
            <person name="Cadieu E."/>
            <person name="Center A."/>
            <person name="Chandra I."/>
            <person name="Cherry J.M."/>
            <person name="Cawley S."/>
            <person name="Dahlke C."/>
            <person name="Davenport L.B."/>
            <person name="Davies P."/>
            <person name="de Pablos B."/>
            <person name="Delcher A."/>
            <person name="Deng Z."/>
            <person name="Mays A.D."/>
            <person name="Dew I."/>
            <person name="Dietz S.M."/>
            <person name="Dodson K."/>
            <person name="Doup L.E."/>
            <person name="Downes M."/>
            <person name="Dugan-Rocha S."/>
            <person name="Dunkov B.C."/>
            <person name="Dunn P."/>
            <person name="Durbin K.J."/>
            <person name="Evangelista C.C."/>
            <person name="Ferraz C."/>
            <person name="Ferriera S."/>
            <person name="Fleischmann W."/>
            <person name="Fosler C."/>
            <person name="Gabrielian A.E."/>
            <person name="Garg N.S."/>
            <person name="Gelbart W.M."/>
            <person name="Glasser K."/>
            <person name="Glodek A."/>
            <person name="Gong F."/>
            <person name="Gorrell J.H."/>
            <person name="Gu Z."/>
            <person name="Guan P."/>
            <person name="Harris M."/>
            <person name="Harris N.L."/>
            <person name="Harvey D.A."/>
            <person name="Heiman T.J."/>
            <person name="Hernandez J.R."/>
            <person name="Houck J."/>
            <person name="Hostin D."/>
            <person name="Houston K.A."/>
            <person name="Howland T.J."/>
            <person name="Wei M.-H."/>
            <person name="Ibegwam C."/>
            <person name="Jalali M."/>
            <person name="Kalush F."/>
            <person name="Karpen G.H."/>
            <person name="Ke Z."/>
            <person name="Kennison J.A."/>
            <person name="Ketchum K.A."/>
            <person name="Kimmel B.E."/>
            <person name="Kodira C.D."/>
            <person name="Kraft C.L."/>
            <person name="Kravitz S."/>
            <person name="Kulp D."/>
            <person name="Lai Z."/>
            <person name="Lasko P."/>
            <person name="Lei Y."/>
            <person name="Levitsky A.A."/>
            <person name="Li J.H."/>
            <person name="Li Z."/>
            <person name="Liang Y."/>
            <person name="Lin X."/>
            <person name="Liu X."/>
            <person name="Mattei B."/>
            <person name="McIntosh T.C."/>
            <person name="McLeod M.P."/>
            <person name="McPherson D."/>
            <person name="Merkulov G."/>
            <person name="Milshina N.V."/>
            <person name="Mobarry C."/>
            <person name="Morris J."/>
            <person name="Moshrefi A."/>
            <person name="Mount S.M."/>
            <person name="Moy M."/>
            <person name="Murphy B."/>
            <person name="Murphy L."/>
            <person name="Muzny D.M."/>
            <person name="Nelson D.L."/>
            <person name="Nelson D.R."/>
            <person name="Nelson K.A."/>
            <person name="Nixon K."/>
            <person name="Nusskern D.R."/>
            <person name="Pacleb J.M."/>
            <person name="Palazzolo M."/>
            <person name="Pittman G.S."/>
            <person name="Pan S."/>
            <person name="Pollard J."/>
            <person name="Puri V."/>
            <person name="Reese M.G."/>
            <person name="Reinert K."/>
            <person name="Remington K."/>
            <person name="Saunders R.D.C."/>
            <person name="Scheeler F."/>
            <person name="Shen H."/>
            <person name="Shue B.C."/>
            <person name="Siden-Kiamos I."/>
            <person name="Simpson M."/>
            <person name="Skupski M.P."/>
            <person name="Smith T.J."/>
            <person name="Spier E."/>
            <person name="Spradling A.C."/>
            <person name="Stapleton M."/>
            <person name="Strong R."/>
            <person name="Sun E."/>
            <person name="Svirskas R."/>
            <person name="Tector C."/>
            <person name="Turner R."/>
            <person name="Venter E."/>
            <person name="Wang A.H."/>
            <person name="Wang X."/>
            <person name="Wang Z.-Y."/>
            <person name="Wassarman D.A."/>
            <person name="Weinstock G.M."/>
            <person name="Weissenbach J."/>
            <person name="Williams S.M."/>
            <person name="Woodage T."/>
            <person name="Worley K.C."/>
            <person name="Wu D."/>
            <person name="Yang S."/>
            <person name="Yao Q.A."/>
            <person name="Ye J."/>
            <person name="Yeh R.-F."/>
            <person name="Zaveri J.S."/>
            <person name="Zhan M."/>
            <person name="Zhang G."/>
            <person name="Zhao Q."/>
            <person name="Zheng L."/>
            <person name="Zheng X.H."/>
            <person name="Zhong F.N."/>
            <person name="Zhong W."/>
            <person name="Zhou X."/>
            <person name="Zhu S.C."/>
            <person name="Zhu X."/>
            <person name="Smith H.O."/>
            <person name="Gibbs R.A."/>
            <person name="Myers E.W."/>
            <person name="Rubin G.M."/>
            <person name="Venter J.C."/>
        </authorList>
    </citation>
    <scope>NUCLEOTIDE SEQUENCE [LARGE SCALE GENOMIC DNA]</scope>
    <source>
        <strain>Berkeley</strain>
    </source>
</reference>
<reference key="2">
    <citation type="journal article" date="2002" name="Genome Biol.">
        <title>Annotation of the Drosophila melanogaster euchromatic genome: a systematic review.</title>
        <authorList>
            <person name="Misra S."/>
            <person name="Crosby M.A."/>
            <person name="Mungall C.J."/>
            <person name="Matthews B.B."/>
            <person name="Campbell K.S."/>
            <person name="Hradecky P."/>
            <person name="Huang Y."/>
            <person name="Kaminker J.S."/>
            <person name="Millburn G.H."/>
            <person name="Prochnik S.E."/>
            <person name="Smith C.D."/>
            <person name="Tupy J.L."/>
            <person name="Whitfield E.J."/>
            <person name="Bayraktaroglu L."/>
            <person name="Berman B.P."/>
            <person name="Bettencourt B.R."/>
            <person name="Celniker S.E."/>
            <person name="de Grey A.D.N.J."/>
            <person name="Drysdale R.A."/>
            <person name="Harris N.L."/>
            <person name="Richter J."/>
            <person name="Russo S."/>
            <person name="Schroeder A.J."/>
            <person name="Shu S.Q."/>
            <person name="Stapleton M."/>
            <person name="Yamada C."/>
            <person name="Ashburner M."/>
            <person name="Gelbart W.M."/>
            <person name="Rubin G.M."/>
            <person name="Lewis S.E."/>
        </authorList>
    </citation>
    <scope>GENOME REANNOTATION</scope>
    <scope>ALTERNATIVE SPLICING</scope>
    <source>
        <strain>Berkeley</strain>
    </source>
</reference>
<reference key="3">
    <citation type="submission" date="2005-08" db="EMBL/GenBank/DDBJ databases">
        <authorList>
            <person name="Stapleton M."/>
            <person name="Carlson J.W."/>
            <person name="Chavez C."/>
            <person name="Frise E."/>
            <person name="George R.A."/>
            <person name="Pacleb J.M."/>
            <person name="Park S."/>
            <person name="Wan K.H."/>
            <person name="Yu C."/>
            <person name="Celniker S.E."/>
        </authorList>
    </citation>
    <scope>NUCLEOTIDE SEQUENCE [LARGE SCALE MRNA] (ISOFORM 1)</scope>
    <source>
        <strain>Berkeley</strain>
        <tissue>Embryo</tissue>
    </source>
</reference>
<reference key="4">
    <citation type="journal article" date="2002" name="Genome Biol.">
        <title>A Drosophila full-length cDNA resource.</title>
        <authorList>
            <person name="Stapleton M."/>
            <person name="Carlson J.W."/>
            <person name="Brokstein P."/>
            <person name="Yu C."/>
            <person name="Champe M."/>
            <person name="George R.A."/>
            <person name="Guarin H."/>
            <person name="Kronmiller B."/>
            <person name="Pacleb J.M."/>
            <person name="Park S."/>
            <person name="Wan K.H."/>
            <person name="Rubin G.M."/>
            <person name="Celniker S.E."/>
        </authorList>
    </citation>
    <scope>NUCLEOTIDE SEQUENCE [LARGE SCALE MRNA] OF 65-590 (ISOFORM 2)</scope>
    <scope>NUCLEOTIDE SEQUENCE [LARGE SCALE MRNA] OF 267-590 (ISOFORM 1/3)</scope>
    <source>
        <strain>Berkeley</strain>
        <tissue>Embryo</tissue>
        <tissue>Head</tissue>
    </source>
</reference>
<reference key="5">
    <citation type="journal article" date="2004" name="J. Neurosci.">
        <title>A conserved role but different partners for the transcriptional corepressor CoREST in fly and mammalian nervous system formation.</title>
        <authorList>
            <person name="Dallman J.E."/>
            <person name="Allopenna J."/>
            <person name="Bassett A."/>
            <person name="Travers A."/>
            <person name="Mandel G."/>
        </authorList>
    </citation>
    <scope>FUNCTION</scope>
    <scope>SUBCELLULAR LOCATION</scope>
    <scope>ALTERNATIVE SPLICING</scope>
    <scope>TISSUE SPECIFICITY</scope>
    <scope>INTERACTION WITH TTK; HDAC1 AND SU(VAR)3-3</scope>
</reference>
<reference key="6">
    <citation type="journal article" date="2007" name="Mol. Biosyst.">
        <title>An integrated chemical, mass spectrometric and computational strategy for (quantitative) phosphoproteomics: application to Drosophila melanogaster Kc167 cells.</title>
        <authorList>
            <person name="Bodenmiller B."/>
            <person name="Mueller L.N."/>
            <person name="Pedrioli P.G.A."/>
            <person name="Pflieger D."/>
            <person name="Juenger M.A."/>
            <person name="Eng J.K."/>
            <person name="Aebersold R."/>
            <person name="Tao W.A."/>
        </authorList>
    </citation>
    <scope>PHOSPHORYLATION [LARGE SCALE ANALYSIS] AT SER-22; SER-34; SER-36 AND SER-560</scope>
    <scope>IDENTIFICATION BY MASS SPECTROMETRY</scope>
</reference>
<reference key="7">
    <citation type="journal article" date="2008" name="J. Proteome Res.">
        <title>Phosphoproteome analysis of Drosophila melanogaster embryos.</title>
        <authorList>
            <person name="Zhai B."/>
            <person name="Villen J."/>
            <person name="Beausoleil S.A."/>
            <person name="Mintseris J."/>
            <person name="Gygi S.P."/>
        </authorList>
    </citation>
    <scope>PHOSPHORYLATION [LARGE SCALE ANALYSIS] AT SER-18; SER-22; THR-25; THR-65; SER-68; SER-69; THR-375; THR-411 AND SER-414</scope>
    <scope>IDENTIFICATION BY MASS SPECTROMETRY</scope>
    <source>
        <tissue>Embryo</tissue>
    </source>
</reference>
<sequence length="590" mass="62696">MVLAERNTTDVVRNGRRSRGPSPNTHTTGGVTNSASLVGSGNNSGHSGNANANEKTTTAVPGAGTPESSDDDNSTKRNGKSKAKQSEYEEKIRVGRDYQAVCPPLVPEAERRPEQMNERALLVWSPTKEIPDLKLEEYISVAKEKYGYNGEQALGMLFWHKHDLERAVMDLANFTPFPDEWTIEDKVLFEQAFQFHGKSFHRIRQMLPDKSIASLVKYYYSWKKTRHRSSAMDRQEKAIKAVVKDGSENGSEVGSNEESDNDDKIQKNRQVMEQLDKECETINVDDVLSKPAAANTESAQPRISARWLPDEIQVALLAIREYGKNFPTIAKVVATKTEAHVRTFYLNNRRRYNLDQIVKEYEAGKSEESGAEEQTEPAVDAAAAGAATASAPSAADSTSAASATADRKQSTENSNNGVETMQESLPKKEDPKKPELAAAVLKIGVAEAADAVATVASSTASGVIGAATSASKPSTSATITIIDESDTATNSSSDVVTTGLATSTGSSALSSTTSAPASKTQTSSEELSAQKSNPASGIAAIGAATGGGQTANSSGSKRDSSVLPVAEQPPAKKIALSTGGGSSVAEFLAN</sequence>
<proteinExistence type="evidence at protein level"/>
<dbReference type="EMBL" id="AE014298">
    <property type="protein sequence ID" value="AAF48966.1"/>
    <property type="molecule type" value="Genomic_DNA"/>
</dbReference>
<dbReference type="EMBL" id="AE014298">
    <property type="protein sequence ID" value="AAN09497.1"/>
    <property type="molecule type" value="Genomic_DNA"/>
</dbReference>
<dbReference type="EMBL" id="AE014298">
    <property type="protein sequence ID" value="AAN09498.1"/>
    <property type="molecule type" value="Genomic_DNA"/>
</dbReference>
<dbReference type="EMBL" id="AE014298">
    <property type="protein sequence ID" value="AAX52507.2"/>
    <property type="molecule type" value="Genomic_DNA"/>
</dbReference>
<dbReference type="EMBL" id="AE014298">
    <property type="protein sequence ID" value="AAX52508.1"/>
    <property type="molecule type" value="Genomic_DNA"/>
</dbReference>
<dbReference type="EMBL" id="BT023817">
    <property type="protein sequence ID" value="AAZ66324.1"/>
    <property type="molecule type" value="mRNA"/>
</dbReference>
<dbReference type="EMBL" id="AY060226">
    <property type="protein sequence ID" value="AAL25265.1"/>
    <property type="status" value="ALT_INIT"/>
    <property type="molecule type" value="mRNA"/>
</dbReference>
<dbReference type="EMBL" id="AY118507">
    <property type="protein sequence ID" value="AAM49876.1"/>
    <property type="status" value="ALT_INIT"/>
    <property type="molecule type" value="mRNA"/>
</dbReference>
<dbReference type="RefSeq" id="NP_001014752.2">
    <molecule id="Q59E36-2"/>
    <property type="nucleotide sequence ID" value="NM_001014752.4"/>
</dbReference>
<dbReference type="RefSeq" id="NP_001014753.1">
    <molecule id="Q59E36-4"/>
    <property type="nucleotide sequence ID" value="NM_001014753.3"/>
</dbReference>
<dbReference type="RefSeq" id="NP_001014754.1">
    <molecule id="Q59E36-3"/>
    <property type="nucleotide sequence ID" value="NM_001014754.1"/>
</dbReference>
<dbReference type="RefSeq" id="NP_001014755.1">
    <molecule id="Q59E36-3"/>
    <property type="nucleotide sequence ID" value="NM_001014755.2"/>
</dbReference>
<dbReference type="RefSeq" id="NP_001014756.1">
    <molecule id="Q59E36-3"/>
    <property type="nucleotide sequence ID" value="NM_001014756.2"/>
</dbReference>
<dbReference type="SMR" id="Q59E36"/>
<dbReference type="BioGRID" id="59243">
    <property type="interactions" value="13"/>
</dbReference>
<dbReference type="FunCoup" id="Q59E36">
    <property type="interactions" value="547"/>
</dbReference>
<dbReference type="IntAct" id="Q59E36">
    <property type="interactions" value="8"/>
</dbReference>
<dbReference type="iPTMnet" id="Q59E36"/>
<dbReference type="DNASU" id="32941"/>
<dbReference type="EnsemblMetazoa" id="FBtr0302859">
    <molecule id="Q59E36-3"/>
    <property type="protein sequence ID" value="FBpp0291999"/>
    <property type="gene ID" value="FBgn0261573"/>
</dbReference>
<dbReference type="EnsemblMetazoa" id="FBtr0302860">
    <molecule id="Q59E36-3"/>
    <property type="protein sequence ID" value="FBpp0292000"/>
    <property type="gene ID" value="FBgn0261573"/>
</dbReference>
<dbReference type="EnsemblMetazoa" id="FBtr0302861">
    <molecule id="Q59E36-3"/>
    <property type="protein sequence ID" value="FBpp0292001"/>
    <property type="gene ID" value="FBgn0261573"/>
</dbReference>
<dbReference type="EnsemblMetazoa" id="FBtr0302862">
    <molecule id="Q59E36-4"/>
    <property type="protein sequence ID" value="FBpp0292002"/>
    <property type="gene ID" value="FBgn0261573"/>
</dbReference>
<dbReference type="EnsemblMetazoa" id="FBtr0302864">
    <molecule id="Q59E36-2"/>
    <property type="protein sequence ID" value="FBpp0292004"/>
    <property type="gene ID" value="FBgn0261573"/>
</dbReference>
<dbReference type="GeneID" id="32941"/>
<dbReference type="KEGG" id="dme:Dmel_CG42687"/>
<dbReference type="UCSC" id="CG33525-RA">
    <molecule id="Q59E36-2"/>
    <property type="organism name" value="d. melanogaster"/>
</dbReference>
<dbReference type="AGR" id="FB:FBgn0261573"/>
<dbReference type="CTD" id="32941"/>
<dbReference type="FlyBase" id="FBgn0261573">
    <property type="gene designation" value="CoRest"/>
</dbReference>
<dbReference type="VEuPathDB" id="VectorBase:FBgn0261573"/>
<dbReference type="eggNOG" id="KOG1194">
    <property type="taxonomic scope" value="Eukaryota"/>
</dbReference>
<dbReference type="GeneTree" id="ENSGT00940000154196"/>
<dbReference type="HOGENOM" id="CLU_026741_2_0_1"/>
<dbReference type="InParanoid" id="Q59E36"/>
<dbReference type="OrthoDB" id="10064338at2759"/>
<dbReference type="Reactome" id="R-DME-3214815">
    <property type="pathway name" value="HDACs deacetylate histones"/>
</dbReference>
<dbReference type="Reactome" id="R-DME-983231">
    <property type="pathway name" value="Factors involved in megakaryocyte development and platelet production"/>
</dbReference>
<dbReference type="BioGRID-ORCS" id="32941">
    <property type="hits" value="1 hit in 3 CRISPR screens"/>
</dbReference>
<dbReference type="GenomeRNAi" id="32941"/>
<dbReference type="PRO" id="PR:Q59E36"/>
<dbReference type="Proteomes" id="UP000000803">
    <property type="component" value="Chromosome X"/>
</dbReference>
<dbReference type="Bgee" id="FBgn0261573">
    <property type="expression patterns" value="Expressed in wing disc and 195 other cell types or tissues"/>
</dbReference>
<dbReference type="ExpressionAtlas" id="Q59E36">
    <property type="expression patterns" value="baseline and differential"/>
</dbReference>
<dbReference type="GO" id="GO:0000118">
    <property type="term" value="C:histone deacetylase complex"/>
    <property type="evidence" value="ECO:0000318"/>
    <property type="project" value="GO_Central"/>
</dbReference>
<dbReference type="GO" id="GO:0005634">
    <property type="term" value="C:nucleus"/>
    <property type="evidence" value="ECO:0000314"/>
    <property type="project" value="FlyBase"/>
</dbReference>
<dbReference type="GO" id="GO:0005667">
    <property type="term" value="C:transcription regulator complex"/>
    <property type="evidence" value="ECO:0000318"/>
    <property type="project" value="GO_Central"/>
</dbReference>
<dbReference type="GO" id="GO:0017053">
    <property type="term" value="C:transcription repressor complex"/>
    <property type="evidence" value="ECO:0000353"/>
    <property type="project" value="FlyBase"/>
</dbReference>
<dbReference type="GO" id="GO:0003682">
    <property type="term" value="F:chromatin binding"/>
    <property type="evidence" value="ECO:0000314"/>
    <property type="project" value="FlyBase"/>
</dbReference>
<dbReference type="GO" id="GO:0003714">
    <property type="term" value="F:transcription corepressor activity"/>
    <property type="evidence" value="ECO:0000314"/>
    <property type="project" value="FlyBase"/>
</dbReference>
<dbReference type="GO" id="GO:0045892">
    <property type="term" value="P:negative regulation of DNA-templated transcription"/>
    <property type="evidence" value="ECO:0000314"/>
    <property type="project" value="FlyBase"/>
</dbReference>
<dbReference type="GO" id="GO:0000122">
    <property type="term" value="P:negative regulation of transcription by RNA polymerase II"/>
    <property type="evidence" value="ECO:0000250"/>
    <property type="project" value="FlyBase"/>
</dbReference>
<dbReference type="GO" id="GO:0006357">
    <property type="term" value="P:regulation of transcription by RNA polymerase II"/>
    <property type="evidence" value="ECO:0000318"/>
    <property type="project" value="GO_Central"/>
</dbReference>
<dbReference type="GO" id="GO:0141006">
    <property type="term" value="P:transposable element silencing by piRNA-mediated heterochromatin formation"/>
    <property type="evidence" value="ECO:0000315"/>
    <property type="project" value="FlyBase"/>
</dbReference>
<dbReference type="CDD" id="cd00167">
    <property type="entry name" value="SANT"/>
    <property type="match status" value="1"/>
</dbReference>
<dbReference type="FunFam" id="1.10.10.60:FF:000033">
    <property type="entry name" value="REST corepressor 3"/>
    <property type="match status" value="1"/>
</dbReference>
<dbReference type="FunFam" id="4.10.1240.50:FF:000002">
    <property type="entry name" value="REST corepressor isoform X1"/>
    <property type="match status" value="1"/>
</dbReference>
<dbReference type="Gene3D" id="1.20.58.1880">
    <property type="match status" value="1"/>
</dbReference>
<dbReference type="Gene3D" id="4.10.1240.50">
    <property type="match status" value="1"/>
</dbReference>
<dbReference type="Gene3D" id="1.10.10.60">
    <property type="entry name" value="Homeodomain-like"/>
    <property type="match status" value="1"/>
</dbReference>
<dbReference type="InterPro" id="IPR000949">
    <property type="entry name" value="ELM2_dom"/>
</dbReference>
<dbReference type="InterPro" id="IPR009057">
    <property type="entry name" value="Homeodomain-like_sf"/>
</dbReference>
<dbReference type="InterPro" id="IPR001005">
    <property type="entry name" value="SANT/Myb"/>
</dbReference>
<dbReference type="InterPro" id="IPR017884">
    <property type="entry name" value="SANT_dom"/>
</dbReference>
<dbReference type="InterPro" id="IPR051066">
    <property type="entry name" value="Trans_reg/Corepressor"/>
</dbReference>
<dbReference type="PANTHER" id="PTHR16089:SF28">
    <property type="entry name" value="REST COREPRESSOR"/>
    <property type="match status" value="1"/>
</dbReference>
<dbReference type="PANTHER" id="PTHR16089">
    <property type="entry name" value="REST COREPRESSOR COREST PROTEIN-RELATED"/>
    <property type="match status" value="1"/>
</dbReference>
<dbReference type="Pfam" id="PF01448">
    <property type="entry name" value="ELM2"/>
    <property type="match status" value="1"/>
</dbReference>
<dbReference type="Pfam" id="PF00249">
    <property type="entry name" value="Myb_DNA-binding"/>
    <property type="match status" value="1"/>
</dbReference>
<dbReference type="SMART" id="SM01189">
    <property type="entry name" value="ELM2"/>
    <property type="match status" value="1"/>
</dbReference>
<dbReference type="SMART" id="SM00717">
    <property type="entry name" value="SANT"/>
    <property type="match status" value="2"/>
</dbReference>
<dbReference type="SUPFAM" id="SSF46689">
    <property type="entry name" value="Homeodomain-like"/>
    <property type="match status" value="2"/>
</dbReference>
<dbReference type="PROSITE" id="PS51156">
    <property type="entry name" value="ELM2"/>
    <property type="match status" value="1"/>
</dbReference>
<dbReference type="PROSITE" id="PS51293">
    <property type="entry name" value="SANT"/>
    <property type="match status" value="2"/>
</dbReference>
<organism>
    <name type="scientific">Drosophila melanogaster</name>
    <name type="common">Fruit fly</name>
    <dbReference type="NCBI Taxonomy" id="7227"/>
    <lineage>
        <taxon>Eukaryota</taxon>
        <taxon>Metazoa</taxon>
        <taxon>Ecdysozoa</taxon>
        <taxon>Arthropoda</taxon>
        <taxon>Hexapoda</taxon>
        <taxon>Insecta</taxon>
        <taxon>Pterygota</taxon>
        <taxon>Neoptera</taxon>
        <taxon>Endopterygota</taxon>
        <taxon>Diptera</taxon>
        <taxon>Brachycera</taxon>
        <taxon>Muscomorpha</taxon>
        <taxon>Ephydroidea</taxon>
        <taxon>Drosophilidae</taxon>
        <taxon>Drosophila</taxon>
        <taxon>Sophophora</taxon>
    </lineage>
</organism>
<keyword id="KW-0025">Alternative splicing</keyword>
<keyword id="KW-0156">Chromatin regulator</keyword>
<keyword id="KW-0175">Coiled coil</keyword>
<keyword id="KW-0539">Nucleus</keyword>
<keyword id="KW-0597">Phosphoprotein</keyword>
<keyword id="KW-1185">Reference proteome</keyword>
<keyword id="KW-0677">Repeat</keyword>
<keyword id="KW-0678">Repressor</keyword>
<keyword id="KW-0804">Transcription</keyword>
<keyword id="KW-0805">Transcription regulation</keyword>
<feature type="chain" id="PRO_0000226784" description="REST corepressor">
    <location>
        <begin position="1"/>
        <end position="590"/>
    </location>
</feature>
<feature type="domain" description="ELM2" evidence="2">
    <location>
        <begin position="90"/>
        <end position="175"/>
    </location>
</feature>
<feature type="domain" description="SANT 1" evidence="3">
    <location>
        <begin position="176"/>
        <end position="227"/>
    </location>
</feature>
<feature type="domain" description="SANT 2" evidence="3">
    <location>
        <begin position="302"/>
        <end position="353"/>
    </location>
</feature>
<feature type="region of interest" description="Disordered" evidence="4">
    <location>
        <begin position="1"/>
        <end position="90"/>
    </location>
</feature>
<feature type="region of interest" description="Disordered" evidence="4">
    <location>
        <begin position="244"/>
        <end position="266"/>
    </location>
</feature>
<feature type="region of interest" description="Disordered" evidence="4">
    <location>
        <begin position="364"/>
        <end position="432"/>
    </location>
</feature>
<feature type="region of interest" description="Disordered" evidence="4">
    <location>
        <begin position="503"/>
        <end position="590"/>
    </location>
</feature>
<feature type="coiled-coil region" evidence="1">
    <location>
        <begin position="256"/>
        <end position="283"/>
    </location>
</feature>
<feature type="compositionally biased region" description="Polar residues" evidence="4">
    <location>
        <begin position="21"/>
        <end position="37"/>
    </location>
</feature>
<feature type="compositionally biased region" description="Low complexity" evidence="4">
    <location>
        <begin position="39"/>
        <end position="53"/>
    </location>
</feature>
<feature type="compositionally biased region" description="Low complexity" evidence="4">
    <location>
        <begin position="378"/>
        <end position="404"/>
    </location>
</feature>
<feature type="compositionally biased region" description="Polar residues" evidence="4">
    <location>
        <begin position="411"/>
        <end position="423"/>
    </location>
</feature>
<feature type="compositionally biased region" description="Low complexity" evidence="4">
    <location>
        <begin position="503"/>
        <end position="524"/>
    </location>
</feature>
<feature type="compositionally biased region" description="Low complexity" evidence="4">
    <location>
        <begin position="532"/>
        <end position="543"/>
    </location>
</feature>
<feature type="modified residue" description="Phosphoserine" evidence="7">
    <location>
        <position position="18"/>
    </location>
</feature>
<feature type="modified residue" description="Phosphoserine" evidence="6 7">
    <location>
        <position position="22"/>
    </location>
</feature>
<feature type="modified residue" description="Phosphothreonine" evidence="7">
    <location>
        <position position="25"/>
    </location>
</feature>
<feature type="modified residue" description="Phosphoserine" evidence="6">
    <location>
        <position position="34"/>
    </location>
</feature>
<feature type="modified residue" description="Phosphoserine" evidence="6">
    <location>
        <position position="36"/>
    </location>
</feature>
<feature type="modified residue" description="Phosphothreonine" evidence="7">
    <location>
        <position position="65"/>
    </location>
</feature>
<feature type="modified residue" description="Phosphoserine" evidence="7">
    <location>
        <position position="68"/>
    </location>
</feature>
<feature type="modified residue" description="Phosphoserine" evidence="7">
    <location>
        <position position="69"/>
    </location>
</feature>
<feature type="modified residue" description="Phosphothreonine" evidence="7">
    <location>
        <position position="375"/>
    </location>
</feature>
<feature type="modified residue" description="Phosphothreonine" evidence="7">
    <location>
        <position position="411"/>
    </location>
</feature>
<feature type="modified residue" description="Phosphoserine" evidence="7">
    <location>
        <position position="414"/>
    </location>
</feature>
<feature type="modified residue" description="Phosphoserine" evidence="6">
    <location>
        <position position="560"/>
    </location>
</feature>
<feature type="splice variant" id="VSP_017466" description="In isoform 2." evidence="8">
    <original>IQKNRQVME</original>
    <variation>IIAVPAHIS</variation>
    <location>
        <begin position="265"/>
        <end position="273"/>
    </location>
</feature>
<feature type="splice variant" id="VSP_055323" description="In isoform 3." evidence="9">
    <location>
        <begin position="265"/>
        <end position="266"/>
    </location>
</feature>
<feature type="splice variant" id="VSP_017467" description="In isoform 2." evidence="8">
    <location>
        <begin position="274"/>
        <end position="590"/>
    </location>
</feature>
<gene>
    <name type="primary">CoRest</name>
    <name type="ORF">CG33525</name>
</gene>
<protein>
    <recommendedName>
        <fullName>REST corepressor</fullName>
    </recommendedName>
    <alternativeName>
        <fullName>CoREST</fullName>
    </alternativeName>
</protein>
<name>RCOR_DROME</name>